<dbReference type="EMBL" id="CP000964">
    <property type="protein sequence ID" value="ACI11204.1"/>
    <property type="molecule type" value="Genomic_DNA"/>
</dbReference>
<dbReference type="SMR" id="B5XWL8"/>
<dbReference type="KEGG" id="kpe:KPK_2351"/>
<dbReference type="HOGENOM" id="CLU_037628_6_2_6"/>
<dbReference type="UniPathway" id="UPA00488"/>
<dbReference type="Proteomes" id="UP000001734">
    <property type="component" value="Chromosome"/>
</dbReference>
<dbReference type="GO" id="GO:0003700">
    <property type="term" value="F:DNA-binding transcription factor activity"/>
    <property type="evidence" value="ECO:0007669"/>
    <property type="project" value="TreeGrafter"/>
</dbReference>
<dbReference type="GO" id="GO:0000976">
    <property type="term" value="F:transcription cis-regulatory region binding"/>
    <property type="evidence" value="ECO:0007669"/>
    <property type="project" value="TreeGrafter"/>
</dbReference>
<dbReference type="GO" id="GO:0045892">
    <property type="term" value="P:negative regulation of DNA-templated transcription"/>
    <property type="evidence" value="ECO:0007669"/>
    <property type="project" value="UniProtKB-UniRule"/>
</dbReference>
<dbReference type="GO" id="GO:0006164">
    <property type="term" value="P:purine nucleotide biosynthetic process"/>
    <property type="evidence" value="ECO:0007669"/>
    <property type="project" value="UniProtKB-UniPathway"/>
</dbReference>
<dbReference type="CDD" id="cd01392">
    <property type="entry name" value="HTH_LacI"/>
    <property type="match status" value="1"/>
</dbReference>
<dbReference type="CDD" id="cd06275">
    <property type="entry name" value="PBP1_PurR"/>
    <property type="match status" value="1"/>
</dbReference>
<dbReference type="FunFam" id="1.10.260.40:FF:000002">
    <property type="entry name" value="HTH-type transcriptional repressor PurR"/>
    <property type="match status" value="1"/>
</dbReference>
<dbReference type="FunFam" id="3.40.50.2300:FF:000045">
    <property type="entry name" value="HTH-type transcriptional repressor PurR"/>
    <property type="match status" value="1"/>
</dbReference>
<dbReference type="Gene3D" id="3.40.50.2300">
    <property type="match status" value="2"/>
</dbReference>
<dbReference type="Gene3D" id="1.10.260.40">
    <property type="entry name" value="lambda repressor-like DNA-binding domains"/>
    <property type="match status" value="1"/>
</dbReference>
<dbReference type="HAMAP" id="MF_01277">
    <property type="entry name" value="HTH_type_PurR"/>
    <property type="match status" value="1"/>
</dbReference>
<dbReference type="InterPro" id="IPR000843">
    <property type="entry name" value="HTH_LacI"/>
</dbReference>
<dbReference type="InterPro" id="IPR046335">
    <property type="entry name" value="LacI/GalR-like_sensor"/>
</dbReference>
<dbReference type="InterPro" id="IPR010982">
    <property type="entry name" value="Lambda_DNA-bd_dom_sf"/>
</dbReference>
<dbReference type="InterPro" id="IPR028082">
    <property type="entry name" value="Peripla_BP_I"/>
</dbReference>
<dbReference type="InterPro" id="IPR023588">
    <property type="entry name" value="Tscrpt_reg_HTH_PurR"/>
</dbReference>
<dbReference type="NCBIfam" id="NF007979">
    <property type="entry name" value="PRK10703.1"/>
    <property type="match status" value="1"/>
</dbReference>
<dbReference type="PANTHER" id="PTHR30146:SF148">
    <property type="entry name" value="HTH-TYPE TRANSCRIPTIONAL REPRESSOR PURR-RELATED"/>
    <property type="match status" value="1"/>
</dbReference>
<dbReference type="PANTHER" id="PTHR30146">
    <property type="entry name" value="LACI-RELATED TRANSCRIPTIONAL REPRESSOR"/>
    <property type="match status" value="1"/>
</dbReference>
<dbReference type="Pfam" id="PF00356">
    <property type="entry name" value="LacI"/>
    <property type="match status" value="1"/>
</dbReference>
<dbReference type="Pfam" id="PF13377">
    <property type="entry name" value="Peripla_BP_3"/>
    <property type="match status" value="1"/>
</dbReference>
<dbReference type="PRINTS" id="PR00036">
    <property type="entry name" value="HTHLACI"/>
</dbReference>
<dbReference type="SMART" id="SM00354">
    <property type="entry name" value="HTH_LACI"/>
    <property type="match status" value="1"/>
</dbReference>
<dbReference type="SUPFAM" id="SSF47413">
    <property type="entry name" value="lambda repressor-like DNA-binding domains"/>
    <property type="match status" value="1"/>
</dbReference>
<dbReference type="SUPFAM" id="SSF53822">
    <property type="entry name" value="Periplasmic binding protein-like I"/>
    <property type="match status" value="1"/>
</dbReference>
<dbReference type="PROSITE" id="PS00356">
    <property type="entry name" value="HTH_LACI_1"/>
    <property type="match status" value="1"/>
</dbReference>
<dbReference type="PROSITE" id="PS50932">
    <property type="entry name" value="HTH_LACI_2"/>
    <property type="match status" value="1"/>
</dbReference>
<accession>B5XWL8</accession>
<protein>
    <recommendedName>
        <fullName evidence="1">HTH-type transcriptional repressor PurR</fullName>
    </recommendedName>
    <alternativeName>
        <fullName evidence="1">Pur regulon repressor</fullName>
    </alternativeName>
    <alternativeName>
        <fullName evidence="1">Purine nucleotide synthesis repressor</fullName>
    </alternativeName>
</protein>
<name>PURR_KLEP3</name>
<gene>
    <name evidence="1" type="primary">purR</name>
    <name type="ordered locus">KPK_2351</name>
</gene>
<comment type="function">
    <text evidence="1">Is the main repressor of the genes involved in the de novo synthesis of purine nucleotides, regulating purB, purC, purEK, purF, purHD, purL, purMN and guaBA expression. PurR is allosterically activated to bind its cognate DNA by binding the purine corepressors, hypoxanthine or guanine, thereby effecting transcription repression.</text>
</comment>
<comment type="pathway">
    <text>Purine metabolism; purine nucleotide biosynthesis [regulation].</text>
</comment>
<comment type="subunit">
    <text evidence="1">Homodimer.</text>
</comment>
<comment type="domain">
    <text evidence="1">Consists of two structural and functional domains: an N-terminal DNA-binding domain, approximately the first 60 residues, and a larger C-terminal domain, approximately 280 residues, which imparts the function of corepressor binding and oligomerization.</text>
</comment>
<reference key="1">
    <citation type="journal article" date="2008" name="PLoS Genet.">
        <title>Complete genome sequence of the N2-fixing broad host range endophyte Klebsiella pneumoniae 342 and virulence predictions verified in mice.</title>
        <authorList>
            <person name="Fouts D.E."/>
            <person name="Tyler H.L."/>
            <person name="DeBoy R.T."/>
            <person name="Daugherty S."/>
            <person name="Ren Q."/>
            <person name="Badger J.H."/>
            <person name="Durkin A.S."/>
            <person name="Huot H."/>
            <person name="Shrivastava S."/>
            <person name="Kothari S."/>
            <person name="Dodson R.J."/>
            <person name="Mohamoud Y."/>
            <person name="Khouri H."/>
            <person name="Roesch L.F.W."/>
            <person name="Krogfelt K.A."/>
            <person name="Struve C."/>
            <person name="Triplett E.W."/>
            <person name="Methe B.A."/>
        </authorList>
    </citation>
    <scope>NUCLEOTIDE SEQUENCE [LARGE SCALE GENOMIC DNA]</scope>
    <source>
        <strain>342</strain>
    </source>
</reference>
<sequence>MATIKDVAKRANVSTTTVSHVINKTRFVAEETRNAVWAAIKELHYSPSAVARSLKVNHTKSIGLLATSSEAAYFAEIIESVEKSCFQKGYTLILGNAWNDPEKQRAYLSMMAQKRVDGLLVMCSEYPDSVLSMLEEYRHIPMVVMDWGEAKADFTDAVIDNAFQGGYIAGRYLIERGHREIGVIPGPLERNTGAGRLAGFMQAMKEAHISVPENWIVQGDFEPESGYRAMQQILSQQHRPTAVFCGGDIMAMGAICAADEMGLRVPQDISLIGYDNVRNARYFSPALTTIHQPKDSLGEAAFNMLLDRIVNKREESQSIEVHPRLVERRSVADGPFVDYRR</sequence>
<proteinExistence type="inferred from homology"/>
<evidence type="ECO:0000255" key="1">
    <source>
        <dbReference type="HAMAP-Rule" id="MF_01277"/>
    </source>
</evidence>
<feature type="chain" id="PRO_1000140295" description="HTH-type transcriptional repressor PurR">
    <location>
        <begin position="1"/>
        <end position="341"/>
    </location>
</feature>
<feature type="domain" description="HTH lacI-type" evidence="1">
    <location>
        <begin position="2"/>
        <end position="56"/>
    </location>
</feature>
<feature type="DNA-binding region" description="H-T-H motif" evidence="1">
    <location>
        <begin position="4"/>
        <end position="23"/>
    </location>
</feature>
<feature type="DNA-binding region" evidence="1">
    <location>
        <begin position="48"/>
        <end position="56"/>
    </location>
</feature>
<feature type="binding site" evidence="1">
    <location>
        <position position="73"/>
    </location>
    <ligand>
        <name>hypoxanthine</name>
        <dbReference type="ChEBI" id="CHEBI:17368"/>
    </ligand>
</feature>
<feature type="binding site" evidence="1">
    <location>
        <position position="190"/>
    </location>
    <ligand>
        <name>hypoxanthine</name>
        <dbReference type="ChEBI" id="CHEBI:17368"/>
    </ligand>
</feature>
<feature type="binding site" evidence="1">
    <location>
        <position position="192"/>
    </location>
    <ligand>
        <name>hypoxanthine</name>
        <dbReference type="ChEBI" id="CHEBI:17368"/>
    </ligand>
</feature>
<feature type="binding site" evidence="1">
    <location>
        <position position="221"/>
    </location>
    <ligand>
        <name>hypoxanthine</name>
        <dbReference type="ChEBI" id="CHEBI:17368"/>
    </ligand>
</feature>
<feature type="binding site" evidence="1">
    <location>
        <position position="275"/>
    </location>
    <ligand>
        <name>hypoxanthine</name>
        <dbReference type="ChEBI" id="CHEBI:17368"/>
    </ligand>
</feature>
<organism>
    <name type="scientific">Klebsiella pneumoniae (strain 342)</name>
    <dbReference type="NCBI Taxonomy" id="507522"/>
    <lineage>
        <taxon>Bacteria</taxon>
        <taxon>Pseudomonadati</taxon>
        <taxon>Pseudomonadota</taxon>
        <taxon>Gammaproteobacteria</taxon>
        <taxon>Enterobacterales</taxon>
        <taxon>Enterobacteriaceae</taxon>
        <taxon>Klebsiella/Raoultella group</taxon>
        <taxon>Klebsiella</taxon>
        <taxon>Klebsiella pneumoniae complex</taxon>
    </lineage>
</organism>
<keyword id="KW-0238">DNA-binding</keyword>
<keyword id="KW-0658">Purine biosynthesis</keyword>
<keyword id="KW-0678">Repressor</keyword>
<keyword id="KW-0804">Transcription</keyword>
<keyword id="KW-0805">Transcription regulation</keyword>